<organism>
    <name type="scientific">Chaetosphaeridium globosum</name>
    <name type="common">Charophycean green alga</name>
    <name type="synonym">Herposteiron globosum</name>
    <dbReference type="NCBI Taxonomy" id="96477"/>
    <lineage>
        <taxon>Eukaryota</taxon>
        <taxon>Viridiplantae</taxon>
        <taxon>Streptophyta</taxon>
        <taxon>Coleochaetophyceae</taxon>
        <taxon>Coleochaetales</taxon>
        <taxon>Chaetosphaeridiaceae</taxon>
        <taxon>Chaetosphaeridium</taxon>
    </lineage>
</organism>
<sequence length="31" mass="3482">MISILTYFGILFGILTITVIIFVALNKIQLI</sequence>
<proteinExistence type="inferred from homology"/>
<protein>
    <recommendedName>
        <fullName evidence="1">Cytochrome b6-f complex subunit 6</fullName>
    </recommendedName>
    <alternativeName>
        <fullName evidence="1">Cytochrome b6-f complex subunit PetL</fullName>
    </alternativeName>
    <alternativeName>
        <fullName evidence="1">Cytochrome b6-f complex subunit VI</fullName>
    </alternativeName>
</protein>
<name>PETL_CHAGL</name>
<geneLocation type="chloroplast"/>
<comment type="function">
    <text evidence="1">Component of the cytochrome b6-f complex, which mediates electron transfer between photosystem II (PSII) and photosystem I (PSI), cyclic electron flow around PSI, and state transitions. PetL is important for photoautotrophic growth as well as for electron transfer efficiency and stability of the cytochrome b6-f complex.</text>
</comment>
<comment type="subunit">
    <text evidence="1">The 4 large subunits of the cytochrome b6-f complex are cytochrome b6, subunit IV (17 kDa polypeptide, PetD), cytochrome f and the Rieske protein, while the 4 small subunits are PetG, PetL, PetM and PetN. The complex functions as a dimer.</text>
</comment>
<comment type="subcellular location">
    <subcellularLocation>
        <location evidence="1">Plastid</location>
        <location evidence="1">Chloroplast thylakoid membrane</location>
        <topology evidence="1">Single-pass membrane protein</topology>
    </subcellularLocation>
</comment>
<comment type="similarity">
    <text evidence="1">Belongs to the PetL family.</text>
</comment>
<feature type="chain" id="PRO_0000220442" description="Cytochrome b6-f complex subunit 6">
    <location>
        <begin position="1"/>
        <end position="31"/>
    </location>
</feature>
<feature type="transmembrane region" description="Helical" evidence="1">
    <location>
        <begin position="4"/>
        <end position="24"/>
    </location>
</feature>
<gene>
    <name evidence="1" type="primary">petL</name>
</gene>
<evidence type="ECO:0000255" key="1">
    <source>
        <dbReference type="HAMAP-Rule" id="MF_00433"/>
    </source>
</evidence>
<accession>Q8M9Y3</accession>
<keyword id="KW-0150">Chloroplast</keyword>
<keyword id="KW-0249">Electron transport</keyword>
<keyword id="KW-0472">Membrane</keyword>
<keyword id="KW-0602">Photosynthesis</keyword>
<keyword id="KW-0934">Plastid</keyword>
<keyword id="KW-0793">Thylakoid</keyword>
<keyword id="KW-0812">Transmembrane</keyword>
<keyword id="KW-1133">Transmembrane helix</keyword>
<keyword id="KW-0813">Transport</keyword>
<dbReference type="EMBL" id="AF494278">
    <property type="protein sequence ID" value="AAM96530.1"/>
    <property type="molecule type" value="Genomic_DNA"/>
</dbReference>
<dbReference type="RefSeq" id="NP_683803.1">
    <property type="nucleotide sequence ID" value="NC_004115.1"/>
</dbReference>
<dbReference type="SMR" id="Q8M9Y3"/>
<dbReference type="GeneID" id="860686"/>
<dbReference type="GO" id="GO:0009535">
    <property type="term" value="C:chloroplast thylakoid membrane"/>
    <property type="evidence" value="ECO:0007669"/>
    <property type="project" value="UniProtKB-SubCell"/>
</dbReference>
<dbReference type="GO" id="GO:0009512">
    <property type="term" value="C:cytochrome b6f complex"/>
    <property type="evidence" value="ECO:0007669"/>
    <property type="project" value="InterPro"/>
</dbReference>
<dbReference type="GO" id="GO:0045158">
    <property type="term" value="F:electron transporter, transferring electrons within cytochrome b6/f complex of photosystem II activity"/>
    <property type="evidence" value="ECO:0007669"/>
    <property type="project" value="UniProtKB-UniRule"/>
</dbReference>
<dbReference type="GO" id="GO:0015979">
    <property type="term" value="P:photosynthesis"/>
    <property type="evidence" value="ECO:0007669"/>
    <property type="project" value="UniProtKB-KW"/>
</dbReference>
<dbReference type="HAMAP" id="MF_00433">
    <property type="entry name" value="Cytb6_f_PetL"/>
    <property type="match status" value="1"/>
</dbReference>
<dbReference type="InterPro" id="IPR007802">
    <property type="entry name" value="Cyt_b6/f_cplx_su6"/>
</dbReference>
<dbReference type="Pfam" id="PF05115">
    <property type="entry name" value="PetL"/>
    <property type="match status" value="1"/>
</dbReference>
<reference key="1">
    <citation type="journal article" date="2002" name="Proc. Natl. Acad. Sci. U.S.A.">
        <title>The chloroplast and mitochondrial genome sequences of the charophyte Chaetosphaeridium globosum: insights into the timing of the events that restructured organelle DNAs within the green algal lineage that led to land plants.</title>
        <authorList>
            <person name="Turmel M."/>
            <person name="Otis C."/>
            <person name="Lemieux C."/>
        </authorList>
    </citation>
    <scope>NUCLEOTIDE SEQUENCE [LARGE SCALE GENOMIC DNA]</scope>
    <source>
        <strain>M1311</strain>
    </source>
</reference>